<protein>
    <recommendedName>
        <fullName evidence="1">Inosose dehydratase</fullName>
        <ecNumber evidence="1">4.2.1.44</ecNumber>
    </recommendedName>
    <alternativeName>
        <fullName evidence="1">2-keto-myo-inositol dehydratase</fullName>
        <shortName evidence="1">2KMI dehydratase</shortName>
    </alternativeName>
</protein>
<dbReference type="EC" id="4.2.1.44" evidence="1"/>
<dbReference type="EMBL" id="AE016879">
    <property type="status" value="NOT_ANNOTATED_CDS"/>
    <property type="molecule type" value="Genomic_DNA"/>
</dbReference>
<dbReference type="EMBL" id="AE017334">
    <property type="status" value="NOT_ANNOTATED_CDS"/>
    <property type="molecule type" value="Genomic_DNA"/>
</dbReference>
<dbReference type="EMBL" id="AE017225">
    <property type="protein sequence ID" value="AAT54648.1"/>
    <property type="status" value="ALT_FRAME"/>
    <property type="molecule type" value="Genomic_DNA"/>
</dbReference>
<dbReference type="RefSeq" id="WP_000471986.1">
    <property type="nucleotide sequence ID" value="NZ_VTZL01000002.1"/>
</dbReference>
<dbReference type="SMR" id="Q6HYJ1"/>
<dbReference type="KEGG" id="banh:HYU01_12485"/>
<dbReference type="KEGG" id="bat:BAS2336"/>
<dbReference type="PATRIC" id="fig|1392.230.peg.2476"/>
<dbReference type="eggNOG" id="COG1082">
    <property type="taxonomic scope" value="Bacteria"/>
</dbReference>
<dbReference type="OMA" id="WRDDKTA"/>
<dbReference type="UniPathway" id="UPA00076">
    <property type="reaction ID" value="UER00144"/>
</dbReference>
<dbReference type="Proteomes" id="UP000000427">
    <property type="component" value="Chromosome"/>
</dbReference>
<dbReference type="Proteomes" id="UP000000594">
    <property type="component" value="Chromosome"/>
</dbReference>
<dbReference type="GO" id="GO:0030145">
    <property type="term" value="F:manganese ion binding"/>
    <property type="evidence" value="ECO:0007669"/>
    <property type="project" value="UniProtKB-UniRule"/>
</dbReference>
<dbReference type="GO" id="GO:0050114">
    <property type="term" value="F:myo-inosose-2 dehydratase activity"/>
    <property type="evidence" value="ECO:0007669"/>
    <property type="project" value="UniProtKB-UniRule"/>
</dbReference>
<dbReference type="GO" id="GO:0019310">
    <property type="term" value="P:inositol catabolic process"/>
    <property type="evidence" value="ECO:0007669"/>
    <property type="project" value="UniProtKB-UniRule"/>
</dbReference>
<dbReference type="Gene3D" id="3.20.20.150">
    <property type="entry name" value="Divalent-metal-dependent TIM barrel enzymes"/>
    <property type="match status" value="1"/>
</dbReference>
<dbReference type="HAMAP" id="MF_01672">
    <property type="entry name" value="IolE"/>
    <property type="match status" value="1"/>
</dbReference>
<dbReference type="InterPro" id="IPR023952">
    <property type="entry name" value="IolE"/>
</dbReference>
<dbReference type="InterPro" id="IPR030823">
    <property type="entry name" value="IolE/MocC"/>
</dbReference>
<dbReference type="InterPro" id="IPR050312">
    <property type="entry name" value="IolE/XylAMocC-like"/>
</dbReference>
<dbReference type="InterPro" id="IPR036237">
    <property type="entry name" value="Xyl_isomerase-like_sf"/>
</dbReference>
<dbReference type="InterPro" id="IPR013022">
    <property type="entry name" value="Xyl_isomerase-like_TIM-brl"/>
</dbReference>
<dbReference type="NCBIfam" id="TIGR04379">
    <property type="entry name" value="myo_inos_iolE"/>
    <property type="match status" value="1"/>
</dbReference>
<dbReference type="PANTHER" id="PTHR12110">
    <property type="entry name" value="HYDROXYPYRUVATE ISOMERASE"/>
    <property type="match status" value="1"/>
</dbReference>
<dbReference type="PANTHER" id="PTHR12110:SF41">
    <property type="entry name" value="INOSOSE DEHYDRATASE"/>
    <property type="match status" value="1"/>
</dbReference>
<dbReference type="Pfam" id="PF01261">
    <property type="entry name" value="AP_endonuc_2"/>
    <property type="match status" value="1"/>
</dbReference>
<dbReference type="SUPFAM" id="SSF51658">
    <property type="entry name" value="Xylose isomerase-like"/>
    <property type="match status" value="1"/>
</dbReference>
<keyword id="KW-0170">Cobalt</keyword>
<keyword id="KW-0456">Lyase</keyword>
<keyword id="KW-0464">Manganese</keyword>
<keyword id="KW-1185">Reference proteome</keyword>
<organism>
    <name type="scientific">Bacillus anthracis</name>
    <dbReference type="NCBI Taxonomy" id="1392"/>
    <lineage>
        <taxon>Bacteria</taxon>
        <taxon>Bacillati</taxon>
        <taxon>Bacillota</taxon>
        <taxon>Bacilli</taxon>
        <taxon>Bacillales</taxon>
        <taxon>Bacillaceae</taxon>
        <taxon>Bacillus</taxon>
        <taxon>Bacillus cereus group</taxon>
    </lineage>
</organism>
<feature type="chain" id="PRO_0000352353" description="Inosose dehydratase">
    <location>
        <begin position="1"/>
        <end position="298"/>
    </location>
</feature>
<proteinExistence type="inferred from homology"/>
<evidence type="ECO:0000255" key="1">
    <source>
        <dbReference type="HAMAP-Rule" id="MF_01672"/>
    </source>
</evidence>
<evidence type="ECO:0000305" key="2"/>
<reference key="1">
    <citation type="journal article" date="2003" name="Nature">
        <title>The genome sequence of Bacillus anthracis Ames and comparison to closely related bacteria.</title>
        <authorList>
            <person name="Read T.D."/>
            <person name="Peterson S.N."/>
            <person name="Tourasse N.J."/>
            <person name="Baillie L.W."/>
            <person name="Paulsen I.T."/>
            <person name="Nelson K.E."/>
            <person name="Tettelin H."/>
            <person name="Fouts D.E."/>
            <person name="Eisen J.A."/>
            <person name="Gill S.R."/>
            <person name="Holtzapple E.K."/>
            <person name="Okstad O.A."/>
            <person name="Helgason E."/>
            <person name="Rilstone J."/>
            <person name="Wu M."/>
            <person name="Kolonay J.F."/>
            <person name="Beanan M.J."/>
            <person name="Dodson R.J."/>
            <person name="Brinkac L.M."/>
            <person name="Gwinn M.L."/>
            <person name="DeBoy R.T."/>
            <person name="Madpu R."/>
            <person name="Daugherty S.C."/>
            <person name="Durkin A.S."/>
            <person name="Haft D.H."/>
            <person name="Nelson W.C."/>
            <person name="Peterson J.D."/>
            <person name="Pop M."/>
            <person name="Khouri H.M."/>
            <person name="Radune D."/>
            <person name="Benton J.L."/>
            <person name="Mahamoud Y."/>
            <person name="Jiang L."/>
            <person name="Hance I.R."/>
            <person name="Weidman J.F."/>
            <person name="Berry K.J."/>
            <person name="Plaut R.D."/>
            <person name="Wolf A.M."/>
            <person name="Watkins K.L."/>
            <person name="Nierman W.C."/>
            <person name="Hazen A."/>
            <person name="Cline R.T."/>
            <person name="Redmond C."/>
            <person name="Thwaite J.E."/>
            <person name="White O."/>
            <person name="Salzberg S.L."/>
            <person name="Thomason B."/>
            <person name="Friedlander A.M."/>
            <person name="Koehler T.M."/>
            <person name="Hanna P.C."/>
            <person name="Kolstoe A.-B."/>
            <person name="Fraser C.M."/>
        </authorList>
    </citation>
    <scope>NUCLEOTIDE SEQUENCE [LARGE SCALE GENOMIC DNA]</scope>
    <source>
        <strain>Ames / isolate Porton</strain>
    </source>
</reference>
<reference key="2">
    <citation type="journal article" date="2009" name="J. Bacteriol.">
        <title>The complete genome sequence of Bacillus anthracis Ames 'Ancestor'.</title>
        <authorList>
            <person name="Ravel J."/>
            <person name="Jiang L."/>
            <person name="Stanley S.T."/>
            <person name="Wilson M.R."/>
            <person name="Decker R.S."/>
            <person name="Read T.D."/>
            <person name="Worsham P."/>
            <person name="Keim P.S."/>
            <person name="Salzberg S.L."/>
            <person name="Fraser-Liggett C.M."/>
            <person name="Rasko D.A."/>
        </authorList>
    </citation>
    <scope>NUCLEOTIDE SEQUENCE [LARGE SCALE GENOMIC DNA]</scope>
    <source>
        <strain>Ames ancestor</strain>
    </source>
</reference>
<reference key="3">
    <citation type="submission" date="2004-01" db="EMBL/GenBank/DDBJ databases">
        <title>Complete genome sequence of Bacillus anthracis Sterne.</title>
        <authorList>
            <person name="Brettin T.S."/>
            <person name="Bruce D."/>
            <person name="Challacombe J.F."/>
            <person name="Gilna P."/>
            <person name="Han C."/>
            <person name="Hill K."/>
            <person name="Hitchcock P."/>
            <person name="Jackson P."/>
            <person name="Keim P."/>
            <person name="Longmire J."/>
            <person name="Lucas S."/>
            <person name="Okinaka R."/>
            <person name="Richardson P."/>
            <person name="Rubin E."/>
            <person name="Tice H."/>
        </authorList>
    </citation>
    <scope>NUCLEOTIDE SEQUENCE [LARGE SCALE GENOMIC DNA]</scope>
    <source>
        <strain>Sterne</strain>
    </source>
</reference>
<comment type="function">
    <text evidence="1">Catalyzes the dehydration of inosose (2-keto-myo-inositol, 2KMI or 2,4,6/3,5-pentahydroxycyclohexanone) to 3D-(3,5/4)-trihydroxycyclohexane-1,2-dione (D-2,3-diketo-4-deoxy-epi-inositol).</text>
</comment>
<comment type="catalytic activity">
    <reaction evidence="1">
        <text>scyllo-inosose = 3D-3,5/4-trihydroxycyclohexane-1,2-dione + H2O</text>
        <dbReference type="Rhea" id="RHEA:14065"/>
        <dbReference type="ChEBI" id="CHEBI:15377"/>
        <dbReference type="ChEBI" id="CHEBI:17811"/>
        <dbReference type="ChEBI" id="CHEBI:28446"/>
        <dbReference type="EC" id="4.2.1.44"/>
    </reaction>
</comment>
<comment type="cofactor">
    <cofactor evidence="1">
        <name>glutathione</name>
        <dbReference type="ChEBI" id="CHEBI:57925"/>
    </cofactor>
</comment>
<comment type="cofactor">
    <cofactor evidence="1">
        <name>Co(2+)</name>
        <dbReference type="ChEBI" id="CHEBI:48828"/>
    </cofactor>
    <cofactor evidence="1">
        <name>Mn(2+)</name>
        <dbReference type="ChEBI" id="CHEBI:29035"/>
    </cofactor>
</comment>
<comment type="pathway">
    <text evidence="1">Polyol metabolism; myo-inositol degradation into acetyl-CoA; acetyl-CoA from myo-inositol: step 2/7.</text>
</comment>
<comment type="similarity">
    <text evidence="1">Belongs to the IolE/MocC family.</text>
</comment>
<comment type="sequence caution" evidence="2">
    <conflict type="frameshift">
        <sequence resource="EMBL-CDS" id="AAT54648"/>
    </conflict>
</comment>
<comment type="sequence caution" evidence="2">
    <conflict type="frameshift">
        <sequence resource="EMBL" id="AE016879"/>
    </conflict>
</comment>
<comment type="sequence caution" evidence="2">
    <conflict type="frameshift">
        <sequence resource="EMBL" id="AE017334"/>
    </conflict>
</comment>
<accession>Q6HYJ1</accession>
<name>IOLE_BACAN</name>
<sequence length="298" mass="33595">MFKENTIKLGIAPIAWTNDDMPELGAENTFEQCISEMALAGFNGSEVGNKYPRNTVVLKKSLELRNLEIASAWFSTFLTTKPIEETVEEFIKHRDFLHGMGAKVIVVSEQGHSIQGLMDVPLFKNKPVFTEEEWEKLADGLHHLGKLAQEKGLHIVYHHHMGTGVQTTTEIEKLMDMTDPALVSLLFDTGHLVFSGEEPLYILKKYLPRIKHVHLKDIRQEVVDVVKEKELSFLQAVKNGAFTVPGDGVIVFDEVFTILANSNYQGWFVVEAEQDPALANPFEYALKARKFIQEKAGL</sequence>
<gene>
    <name evidence="1" type="primary">iolE</name>
    <name type="ordered locus">BA_2515</name>
    <name type="ordered locus">GBAA_2515</name>
    <name type="ordered locus">BAS2336</name>
</gene>